<organism>
    <name type="scientific">Homo sapiens</name>
    <name type="common">Human</name>
    <dbReference type="NCBI Taxonomy" id="9606"/>
    <lineage>
        <taxon>Eukaryota</taxon>
        <taxon>Metazoa</taxon>
        <taxon>Chordata</taxon>
        <taxon>Craniata</taxon>
        <taxon>Vertebrata</taxon>
        <taxon>Euteleostomi</taxon>
        <taxon>Mammalia</taxon>
        <taxon>Eutheria</taxon>
        <taxon>Euarchontoglires</taxon>
        <taxon>Primates</taxon>
        <taxon>Haplorrhini</taxon>
        <taxon>Catarrhini</taxon>
        <taxon>Hominidae</taxon>
        <taxon>Homo</taxon>
    </lineage>
</organism>
<protein>
    <recommendedName>
        <fullName>Protein TEX261</fullName>
    </recommendedName>
</protein>
<proteinExistence type="evidence at protein level"/>
<feature type="chain" id="PRO_0000247433" description="Protein TEX261">
    <location>
        <begin position="1"/>
        <end position="196"/>
    </location>
</feature>
<feature type="transmembrane region" description="Helical" evidence="1">
    <location>
        <begin position="3"/>
        <end position="23"/>
    </location>
</feature>
<feature type="transmembrane region" description="Helical" evidence="1">
    <location>
        <begin position="42"/>
        <end position="62"/>
    </location>
</feature>
<feature type="transmembrane region" description="Helical" evidence="1">
    <location>
        <begin position="70"/>
        <end position="90"/>
    </location>
</feature>
<feature type="transmembrane region" description="Helical" evidence="1">
    <location>
        <begin position="97"/>
        <end position="117"/>
    </location>
</feature>
<feature type="transmembrane region" description="Helical" evidence="1">
    <location>
        <begin position="125"/>
        <end position="145"/>
    </location>
</feature>
<dbReference type="EMBL" id="AY358783">
    <property type="protein sequence ID" value="AAQ89143.1"/>
    <property type="molecule type" value="mRNA"/>
</dbReference>
<dbReference type="EMBL" id="CH471053">
    <property type="protein sequence ID" value="EAW99783.1"/>
    <property type="molecule type" value="Genomic_DNA"/>
</dbReference>
<dbReference type="EMBL" id="CH471053">
    <property type="protein sequence ID" value="EAW99785.1"/>
    <property type="molecule type" value="Genomic_DNA"/>
</dbReference>
<dbReference type="EMBL" id="BC020251">
    <property type="protein sequence ID" value="AAH20251.2"/>
    <property type="molecule type" value="mRNA"/>
</dbReference>
<dbReference type="EMBL" id="BC128461">
    <property type="protein sequence ID" value="AAI28462.1"/>
    <property type="molecule type" value="mRNA"/>
</dbReference>
<dbReference type="EMBL" id="BC128462">
    <property type="protein sequence ID" value="AAI28463.1"/>
    <property type="molecule type" value="mRNA"/>
</dbReference>
<dbReference type="CCDS" id="CCDS1914.1"/>
<dbReference type="RefSeq" id="NP_653183.2">
    <property type="nucleotide sequence ID" value="NM_144582.2"/>
</dbReference>
<dbReference type="BioGRID" id="125244">
    <property type="interactions" value="2"/>
</dbReference>
<dbReference type="FunCoup" id="Q6UWH6">
    <property type="interactions" value="440"/>
</dbReference>
<dbReference type="IntAct" id="Q6UWH6">
    <property type="interactions" value="1"/>
</dbReference>
<dbReference type="STRING" id="9606.ENSP00000272438"/>
<dbReference type="iPTMnet" id="Q6UWH6"/>
<dbReference type="PhosphoSitePlus" id="Q6UWH6"/>
<dbReference type="BioMuta" id="TEX261"/>
<dbReference type="DMDM" id="74749387"/>
<dbReference type="MassIVE" id="Q6UWH6"/>
<dbReference type="PaxDb" id="9606-ENSP00000272438"/>
<dbReference type="PeptideAtlas" id="Q6UWH6"/>
<dbReference type="ProteomicsDB" id="67481"/>
<dbReference type="Antibodypedia" id="16398">
    <property type="antibodies" value="69 antibodies from 12 providers"/>
</dbReference>
<dbReference type="DNASU" id="113419"/>
<dbReference type="Ensembl" id="ENST00000272438.9">
    <property type="protein sequence ID" value="ENSP00000272438.4"/>
    <property type="gene ID" value="ENSG00000144043.13"/>
</dbReference>
<dbReference type="GeneID" id="113419"/>
<dbReference type="KEGG" id="hsa:113419"/>
<dbReference type="MANE-Select" id="ENST00000272438.9">
    <property type="protein sequence ID" value="ENSP00000272438.4"/>
    <property type="RefSeq nucleotide sequence ID" value="NM_144582.3"/>
    <property type="RefSeq protein sequence ID" value="NP_653183.2"/>
</dbReference>
<dbReference type="UCSC" id="uc002shn.4">
    <property type="organism name" value="human"/>
</dbReference>
<dbReference type="AGR" id="HGNC:30712"/>
<dbReference type="CTD" id="113419"/>
<dbReference type="GeneCards" id="TEX261"/>
<dbReference type="HGNC" id="HGNC:30712">
    <property type="gene designation" value="TEX261"/>
</dbReference>
<dbReference type="HPA" id="ENSG00000144043">
    <property type="expression patterns" value="Low tissue specificity"/>
</dbReference>
<dbReference type="MIM" id="618562">
    <property type="type" value="gene"/>
</dbReference>
<dbReference type="neXtProt" id="NX_Q6UWH6"/>
<dbReference type="OpenTargets" id="ENSG00000144043"/>
<dbReference type="PharmGKB" id="PA134885680"/>
<dbReference type="VEuPathDB" id="HostDB:ENSG00000144043"/>
<dbReference type="eggNOG" id="KOG4136">
    <property type="taxonomic scope" value="Eukaryota"/>
</dbReference>
<dbReference type="GeneTree" id="ENSGT00390000010888"/>
<dbReference type="HOGENOM" id="CLU_058268_2_0_1"/>
<dbReference type="InParanoid" id="Q6UWH6"/>
<dbReference type="OMA" id="TMGTEPV"/>
<dbReference type="OrthoDB" id="28257at2759"/>
<dbReference type="PAN-GO" id="Q6UWH6">
    <property type="GO annotations" value="5 GO annotations based on evolutionary models"/>
</dbReference>
<dbReference type="PhylomeDB" id="Q6UWH6"/>
<dbReference type="TreeFam" id="TF324741"/>
<dbReference type="PathwayCommons" id="Q6UWH6"/>
<dbReference type="SignaLink" id="Q6UWH6"/>
<dbReference type="BioGRID-ORCS" id="113419">
    <property type="hits" value="11 hits in 1132 CRISPR screens"/>
</dbReference>
<dbReference type="ChiTaRS" id="TEX261">
    <property type="organism name" value="human"/>
</dbReference>
<dbReference type="GenomeRNAi" id="113419"/>
<dbReference type="Pharos" id="Q6UWH6">
    <property type="development level" value="Tdark"/>
</dbReference>
<dbReference type="PRO" id="PR:Q6UWH6"/>
<dbReference type="Proteomes" id="UP000005640">
    <property type="component" value="Chromosome 2"/>
</dbReference>
<dbReference type="RNAct" id="Q6UWH6">
    <property type="molecule type" value="protein"/>
</dbReference>
<dbReference type="Bgee" id="ENSG00000144043">
    <property type="expression patterns" value="Expressed in islet of Langerhans and 209 other cell types or tissues"/>
</dbReference>
<dbReference type="ExpressionAtlas" id="Q6UWH6">
    <property type="expression patterns" value="baseline and differential"/>
</dbReference>
<dbReference type="GO" id="GO:0030134">
    <property type="term" value="C:COPII-coated ER to Golgi transport vesicle"/>
    <property type="evidence" value="ECO:0000318"/>
    <property type="project" value="GO_Central"/>
</dbReference>
<dbReference type="GO" id="GO:0005789">
    <property type="term" value="C:endoplasmic reticulum membrane"/>
    <property type="evidence" value="ECO:0000318"/>
    <property type="project" value="GO_Central"/>
</dbReference>
<dbReference type="GO" id="GO:0000139">
    <property type="term" value="C:Golgi membrane"/>
    <property type="evidence" value="ECO:0000318"/>
    <property type="project" value="GO_Central"/>
</dbReference>
<dbReference type="GO" id="GO:0097020">
    <property type="term" value="F:COPII receptor activity"/>
    <property type="evidence" value="ECO:0000318"/>
    <property type="project" value="GO_Central"/>
</dbReference>
<dbReference type="GO" id="GO:0006888">
    <property type="term" value="P:endoplasmic reticulum to Golgi vesicle-mediated transport"/>
    <property type="evidence" value="ECO:0000318"/>
    <property type="project" value="GO_Central"/>
</dbReference>
<dbReference type="GO" id="GO:0043065">
    <property type="term" value="P:positive regulation of apoptotic process"/>
    <property type="evidence" value="ECO:0007669"/>
    <property type="project" value="Ensembl"/>
</dbReference>
<dbReference type="InterPro" id="IPR007277">
    <property type="entry name" value="Svp26/Tex261"/>
</dbReference>
<dbReference type="PANTHER" id="PTHR13144:SF0">
    <property type="entry name" value="PROTEIN TEX261"/>
    <property type="match status" value="1"/>
</dbReference>
<dbReference type="PANTHER" id="PTHR13144">
    <property type="entry name" value="TEX261 PROTEIN"/>
    <property type="match status" value="1"/>
</dbReference>
<dbReference type="Pfam" id="PF04148">
    <property type="entry name" value="Erv26"/>
    <property type="match status" value="1"/>
</dbReference>
<comment type="subcellular location">
    <subcellularLocation>
        <location evidence="2">Membrane</location>
        <topology evidence="2">Multi-pass membrane protein</topology>
    </subcellularLocation>
</comment>
<comment type="similarity">
    <text evidence="2">Belongs to the SVP26 family.</text>
</comment>
<evidence type="ECO:0000255" key="1"/>
<evidence type="ECO:0000305" key="2"/>
<accession>Q6UWH6</accession>
<accession>A1A587</accession>
<accession>D6W5G9</accession>
<accession>Q8WUJ5</accession>
<name>TX261_HUMAN</name>
<sequence>MWFMYLLSWLSLFIQVAFITLAVAAGLYYLAELIEEYTVATSRIIKYMIWFSTAVLIGLYVFERFPTSMIGVGLFTNLVYFGLLQTFPFIMLTSPNFILSCGLVVVNHYLAFQFFAEEYYPFSEVLAYFTFCLWIIPFAFFVSLSAGENVLPSTMQPGDDVVSNYFTKGKRGKRLGILVVFSFIKEAILPSRQKIY</sequence>
<keyword id="KW-0472">Membrane</keyword>
<keyword id="KW-1267">Proteomics identification</keyword>
<keyword id="KW-1185">Reference proteome</keyword>
<keyword id="KW-0812">Transmembrane</keyword>
<keyword id="KW-1133">Transmembrane helix</keyword>
<reference key="1">
    <citation type="journal article" date="2003" name="Genome Res.">
        <title>The secreted protein discovery initiative (SPDI), a large-scale effort to identify novel human secreted and transmembrane proteins: a bioinformatics assessment.</title>
        <authorList>
            <person name="Clark H.F."/>
            <person name="Gurney A.L."/>
            <person name="Abaya E."/>
            <person name="Baker K."/>
            <person name="Baldwin D.T."/>
            <person name="Brush J."/>
            <person name="Chen J."/>
            <person name="Chow B."/>
            <person name="Chui C."/>
            <person name="Crowley C."/>
            <person name="Currell B."/>
            <person name="Deuel B."/>
            <person name="Dowd P."/>
            <person name="Eaton D."/>
            <person name="Foster J.S."/>
            <person name="Grimaldi C."/>
            <person name="Gu Q."/>
            <person name="Hass P.E."/>
            <person name="Heldens S."/>
            <person name="Huang A."/>
            <person name="Kim H.S."/>
            <person name="Klimowski L."/>
            <person name="Jin Y."/>
            <person name="Johnson S."/>
            <person name="Lee J."/>
            <person name="Lewis L."/>
            <person name="Liao D."/>
            <person name="Mark M.R."/>
            <person name="Robbie E."/>
            <person name="Sanchez C."/>
            <person name="Schoenfeld J."/>
            <person name="Seshagiri S."/>
            <person name="Simmons L."/>
            <person name="Singh J."/>
            <person name="Smith V."/>
            <person name="Stinson J."/>
            <person name="Vagts A."/>
            <person name="Vandlen R.L."/>
            <person name="Watanabe C."/>
            <person name="Wieand D."/>
            <person name="Woods K."/>
            <person name="Xie M.-H."/>
            <person name="Yansura D.G."/>
            <person name="Yi S."/>
            <person name="Yu G."/>
            <person name="Yuan J."/>
            <person name="Zhang M."/>
            <person name="Zhang Z."/>
            <person name="Goddard A.D."/>
            <person name="Wood W.I."/>
            <person name="Godowski P.J."/>
            <person name="Gray A.M."/>
        </authorList>
    </citation>
    <scope>NUCLEOTIDE SEQUENCE [LARGE SCALE MRNA]</scope>
</reference>
<reference key="2">
    <citation type="submission" date="2005-09" db="EMBL/GenBank/DDBJ databases">
        <authorList>
            <person name="Mural R.J."/>
            <person name="Istrail S."/>
            <person name="Sutton G.G."/>
            <person name="Florea L."/>
            <person name="Halpern A.L."/>
            <person name="Mobarry C.M."/>
            <person name="Lippert R."/>
            <person name="Walenz B."/>
            <person name="Shatkay H."/>
            <person name="Dew I."/>
            <person name="Miller J.R."/>
            <person name="Flanigan M.J."/>
            <person name="Edwards N.J."/>
            <person name="Bolanos R."/>
            <person name="Fasulo D."/>
            <person name="Halldorsson B.V."/>
            <person name="Hannenhalli S."/>
            <person name="Turner R."/>
            <person name="Yooseph S."/>
            <person name="Lu F."/>
            <person name="Nusskern D.R."/>
            <person name="Shue B.C."/>
            <person name="Zheng X.H."/>
            <person name="Zhong F."/>
            <person name="Delcher A.L."/>
            <person name="Huson D.H."/>
            <person name="Kravitz S.A."/>
            <person name="Mouchard L."/>
            <person name="Reinert K."/>
            <person name="Remington K.A."/>
            <person name="Clark A.G."/>
            <person name="Waterman M.S."/>
            <person name="Eichler E.E."/>
            <person name="Adams M.D."/>
            <person name="Hunkapiller M.W."/>
            <person name="Myers E.W."/>
            <person name="Venter J.C."/>
        </authorList>
    </citation>
    <scope>NUCLEOTIDE SEQUENCE [LARGE SCALE GENOMIC DNA]</scope>
</reference>
<reference key="3">
    <citation type="journal article" date="2004" name="Genome Res.">
        <title>The status, quality, and expansion of the NIH full-length cDNA project: the Mammalian Gene Collection (MGC).</title>
        <authorList>
            <consortium name="The MGC Project Team"/>
        </authorList>
    </citation>
    <scope>NUCLEOTIDE SEQUENCE [LARGE SCALE MRNA]</scope>
    <source>
        <tissue>Placenta</tissue>
    </source>
</reference>
<gene>
    <name type="primary">TEX261</name>
    <name type="ORF">UNQ1882/PRO4325</name>
</gene>